<evidence type="ECO:0000250" key="1">
    <source>
        <dbReference type="UniProtKB" id="P50389"/>
    </source>
</evidence>
<evidence type="ECO:0000255" key="2">
    <source>
        <dbReference type="HAMAP-Rule" id="MF_01627"/>
    </source>
</evidence>
<dbReference type="EC" id="2.4.2.1" evidence="2"/>
<dbReference type="EMBL" id="CP000113">
    <property type="protein sequence ID" value="ABF90899.1"/>
    <property type="molecule type" value="Genomic_DNA"/>
</dbReference>
<dbReference type="RefSeq" id="WP_011552381.1">
    <property type="nucleotide sequence ID" value="NC_008095.1"/>
</dbReference>
<dbReference type="SMR" id="Q1D9Z7"/>
<dbReference type="STRING" id="246197.MXAN_2306"/>
<dbReference type="EnsemblBacteria" id="ABF90899">
    <property type="protein sequence ID" value="ABF90899"/>
    <property type="gene ID" value="MXAN_2306"/>
</dbReference>
<dbReference type="GeneID" id="41359693"/>
<dbReference type="KEGG" id="mxa:MXAN_2306"/>
<dbReference type="eggNOG" id="COG0813">
    <property type="taxonomic scope" value="Bacteria"/>
</dbReference>
<dbReference type="HOGENOM" id="CLU_068457_2_0_7"/>
<dbReference type="OrthoDB" id="9782889at2"/>
<dbReference type="Proteomes" id="UP000002402">
    <property type="component" value="Chromosome"/>
</dbReference>
<dbReference type="GO" id="GO:0005829">
    <property type="term" value="C:cytosol"/>
    <property type="evidence" value="ECO:0007669"/>
    <property type="project" value="TreeGrafter"/>
</dbReference>
<dbReference type="GO" id="GO:0004731">
    <property type="term" value="F:purine-nucleoside phosphorylase activity"/>
    <property type="evidence" value="ECO:0007669"/>
    <property type="project" value="UniProtKB-EC"/>
</dbReference>
<dbReference type="GO" id="GO:0006152">
    <property type="term" value="P:purine nucleoside catabolic process"/>
    <property type="evidence" value="ECO:0007669"/>
    <property type="project" value="TreeGrafter"/>
</dbReference>
<dbReference type="CDD" id="cd09006">
    <property type="entry name" value="PNP_EcPNPI-like"/>
    <property type="match status" value="1"/>
</dbReference>
<dbReference type="Gene3D" id="3.40.50.1580">
    <property type="entry name" value="Nucleoside phosphorylase domain"/>
    <property type="match status" value="1"/>
</dbReference>
<dbReference type="HAMAP" id="MF_01627">
    <property type="entry name" value="Pur_nucleosid_phosp"/>
    <property type="match status" value="1"/>
</dbReference>
<dbReference type="InterPro" id="IPR004402">
    <property type="entry name" value="DeoD-type"/>
</dbReference>
<dbReference type="InterPro" id="IPR018016">
    <property type="entry name" value="Nucleoside_phosphorylase_CS"/>
</dbReference>
<dbReference type="InterPro" id="IPR000845">
    <property type="entry name" value="Nucleoside_phosphorylase_d"/>
</dbReference>
<dbReference type="InterPro" id="IPR035994">
    <property type="entry name" value="Nucleoside_phosphorylase_sf"/>
</dbReference>
<dbReference type="NCBIfam" id="TIGR00107">
    <property type="entry name" value="deoD"/>
    <property type="match status" value="1"/>
</dbReference>
<dbReference type="NCBIfam" id="NF004489">
    <property type="entry name" value="PRK05819.1"/>
    <property type="match status" value="1"/>
</dbReference>
<dbReference type="NCBIfam" id="NF009914">
    <property type="entry name" value="PRK13374.1"/>
    <property type="match status" value="1"/>
</dbReference>
<dbReference type="PANTHER" id="PTHR43691:SF11">
    <property type="entry name" value="FI09636P-RELATED"/>
    <property type="match status" value="1"/>
</dbReference>
<dbReference type="PANTHER" id="PTHR43691">
    <property type="entry name" value="URIDINE PHOSPHORYLASE"/>
    <property type="match status" value="1"/>
</dbReference>
<dbReference type="Pfam" id="PF01048">
    <property type="entry name" value="PNP_UDP_1"/>
    <property type="match status" value="1"/>
</dbReference>
<dbReference type="SUPFAM" id="SSF53167">
    <property type="entry name" value="Purine and uridine phosphorylases"/>
    <property type="match status" value="1"/>
</dbReference>
<dbReference type="PROSITE" id="PS01232">
    <property type="entry name" value="PNP_UDP_1"/>
    <property type="match status" value="1"/>
</dbReference>
<keyword id="KW-0328">Glycosyltransferase</keyword>
<keyword id="KW-1185">Reference proteome</keyword>
<keyword id="KW-0808">Transferase</keyword>
<gene>
    <name evidence="2" type="primary">deoD</name>
    <name type="ordered locus">MXAN_2306</name>
</gene>
<reference key="1">
    <citation type="journal article" date="2006" name="Proc. Natl. Acad. Sci. U.S.A.">
        <title>Evolution of sensory complexity recorded in a myxobacterial genome.</title>
        <authorList>
            <person name="Goldman B.S."/>
            <person name="Nierman W.C."/>
            <person name="Kaiser D."/>
            <person name="Slater S.C."/>
            <person name="Durkin A.S."/>
            <person name="Eisen J.A."/>
            <person name="Ronning C.M."/>
            <person name="Barbazuk W.B."/>
            <person name="Blanchard M."/>
            <person name="Field C."/>
            <person name="Halling C."/>
            <person name="Hinkle G."/>
            <person name="Iartchuk O."/>
            <person name="Kim H.S."/>
            <person name="Mackenzie C."/>
            <person name="Madupu R."/>
            <person name="Miller N."/>
            <person name="Shvartsbeyn A."/>
            <person name="Sullivan S.A."/>
            <person name="Vaudin M."/>
            <person name="Wiegand R."/>
            <person name="Kaplan H.B."/>
        </authorList>
    </citation>
    <scope>NUCLEOTIDE SEQUENCE [LARGE SCALE GENOMIC DNA]</scope>
    <source>
        <strain>DK1622</strain>
    </source>
</reference>
<protein>
    <recommendedName>
        <fullName evidence="2">Purine nucleoside phosphorylase DeoD-type</fullName>
        <shortName evidence="2">PNP</shortName>
        <ecNumber evidence="2">2.4.2.1</ecNumber>
    </recommendedName>
</protein>
<accession>Q1D9Z7</accession>
<feature type="chain" id="PRO_1000069638" description="Purine nucleoside phosphorylase DeoD-type">
    <location>
        <begin position="1"/>
        <end position="239"/>
    </location>
</feature>
<feature type="active site" description="Proton donor" evidence="2">
    <location>
        <position position="205"/>
    </location>
</feature>
<feature type="binding site" evidence="1">
    <location>
        <position position="5"/>
    </location>
    <ligand>
        <name>a purine D-ribonucleoside</name>
        <dbReference type="ChEBI" id="CHEBI:142355"/>
        <note>ligand shared between dimeric partners</note>
    </ligand>
</feature>
<feature type="binding site" description="in other chain" evidence="1">
    <location>
        <position position="21"/>
    </location>
    <ligand>
        <name>phosphate</name>
        <dbReference type="ChEBI" id="CHEBI:43474"/>
        <note>ligand shared between dimeric partners</note>
    </ligand>
</feature>
<feature type="binding site" description="in other chain" evidence="1">
    <location>
        <position position="25"/>
    </location>
    <ligand>
        <name>phosphate</name>
        <dbReference type="ChEBI" id="CHEBI:43474"/>
        <note>ligand shared between dimeric partners</note>
    </ligand>
</feature>
<feature type="binding site" evidence="1">
    <location>
        <position position="44"/>
    </location>
    <ligand>
        <name>phosphate</name>
        <dbReference type="ChEBI" id="CHEBI:43474"/>
        <note>ligand shared between dimeric partners</note>
    </ligand>
</feature>
<feature type="binding site" description="in other chain" evidence="1">
    <location>
        <begin position="88"/>
        <end position="91"/>
    </location>
    <ligand>
        <name>phosphate</name>
        <dbReference type="ChEBI" id="CHEBI:43474"/>
        <note>ligand shared between dimeric partners</note>
    </ligand>
</feature>
<feature type="binding site" description="in other chain" evidence="1">
    <location>
        <begin position="180"/>
        <end position="182"/>
    </location>
    <ligand>
        <name>a purine D-ribonucleoside</name>
        <dbReference type="ChEBI" id="CHEBI:142355"/>
        <note>ligand shared between dimeric partners</note>
    </ligand>
</feature>
<feature type="binding site" description="in other chain" evidence="1">
    <location>
        <begin position="204"/>
        <end position="205"/>
    </location>
    <ligand>
        <name>a purine D-ribonucleoside</name>
        <dbReference type="ChEBI" id="CHEBI:142355"/>
        <note>ligand shared between dimeric partners</note>
    </ligand>
</feature>
<feature type="site" description="Important for catalytic activity" evidence="2">
    <location>
        <position position="218"/>
    </location>
</feature>
<name>DEOD_MYXXD</name>
<sequence>MATPHISAAPGDFADVVLMPGDPLRARYISDRFLEGAREVTSVRNMLGFTGTFRGRRVSVMGHGMGVPSISIYATELIKTYGVRVIIRVGSCGALSTDVKVREVIVATGAGTDSNVNRMRLMGHDFAAVADFTLARRAMEAAERRNKPVRAGPVFTSDLFYHPQEQLNATLARMGVLAVEMEVAGLYGVAAESGARALGLLTVSDHIITGESLTPQERQTTFDEMIELALDVAHAEPTP</sequence>
<comment type="function">
    <text evidence="2">Catalyzes the reversible phosphorolytic breakdown of the N-glycosidic bond in the beta-(deoxy)ribonucleoside molecules, with the formation of the corresponding free purine bases and pentose-1-phosphate.</text>
</comment>
<comment type="catalytic activity">
    <reaction evidence="2">
        <text>a purine D-ribonucleoside + phosphate = a purine nucleobase + alpha-D-ribose 1-phosphate</text>
        <dbReference type="Rhea" id="RHEA:19805"/>
        <dbReference type="ChEBI" id="CHEBI:26386"/>
        <dbReference type="ChEBI" id="CHEBI:43474"/>
        <dbReference type="ChEBI" id="CHEBI:57720"/>
        <dbReference type="ChEBI" id="CHEBI:142355"/>
        <dbReference type="EC" id="2.4.2.1"/>
    </reaction>
</comment>
<comment type="catalytic activity">
    <reaction evidence="2">
        <text>a purine 2'-deoxy-D-ribonucleoside + phosphate = a purine nucleobase + 2-deoxy-alpha-D-ribose 1-phosphate</text>
        <dbReference type="Rhea" id="RHEA:36431"/>
        <dbReference type="ChEBI" id="CHEBI:26386"/>
        <dbReference type="ChEBI" id="CHEBI:43474"/>
        <dbReference type="ChEBI" id="CHEBI:57259"/>
        <dbReference type="ChEBI" id="CHEBI:142361"/>
        <dbReference type="EC" id="2.4.2.1"/>
    </reaction>
</comment>
<comment type="subunit">
    <text evidence="2">Homohexamer; trimer of homodimers.</text>
</comment>
<comment type="similarity">
    <text evidence="2">Belongs to the PNP/UDP phosphorylase family.</text>
</comment>
<proteinExistence type="inferred from homology"/>
<organism>
    <name type="scientific">Myxococcus xanthus (strain DK1622)</name>
    <dbReference type="NCBI Taxonomy" id="246197"/>
    <lineage>
        <taxon>Bacteria</taxon>
        <taxon>Pseudomonadati</taxon>
        <taxon>Myxococcota</taxon>
        <taxon>Myxococcia</taxon>
        <taxon>Myxococcales</taxon>
        <taxon>Cystobacterineae</taxon>
        <taxon>Myxococcaceae</taxon>
        <taxon>Myxococcus</taxon>
    </lineage>
</organism>